<comment type="function">
    <text evidence="1">Excises uracil residues from the DNA which can arise as a result of misincorporation of dUMP residues by DNA polymerase or due to deamination of cytosine.</text>
</comment>
<comment type="catalytic activity">
    <reaction evidence="1">
        <text>Hydrolyzes single-stranded DNA or mismatched double-stranded DNA and polynucleotides, releasing free uracil.</text>
        <dbReference type="EC" id="3.2.2.27"/>
    </reaction>
</comment>
<comment type="subcellular location">
    <subcellularLocation>
        <location evidence="1">Cytoplasm</location>
    </subcellularLocation>
</comment>
<comment type="similarity">
    <text evidence="1">Belongs to the uracil-DNA glycosylase (UDG) superfamily. UNG family.</text>
</comment>
<dbReference type="EC" id="3.2.2.27" evidence="1"/>
<dbReference type="EMBL" id="FM204883">
    <property type="protein sequence ID" value="CAW94148.1"/>
    <property type="molecule type" value="Genomic_DNA"/>
</dbReference>
<dbReference type="RefSeq" id="WP_012679683.1">
    <property type="nucleotide sequence ID" value="NC_012471.1"/>
</dbReference>
<dbReference type="SMR" id="C0M7J9"/>
<dbReference type="KEGG" id="seu:SEQ_1343"/>
<dbReference type="HOGENOM" id="CLU_032162_3_1_9"/>
<dbReference type="OrthoDB" id="9804372at2"/>
<dbReference type="Proteomes" id="UP000001365">
    <property type="component" value="Chromosome"/>
</dbReference>
<dbReference type="GO" id="GO:0005737">
    <property type="term" value="C:cytoplasm"/>
    <property type="evidence" value="ECO:0007669"/>
    <property type="project" value="UniProtKB-SubCell"/>
</dbReference>
<dbReference type="GO" id="GO:0004844">
    <property type="term" value="F:uracil DNA N-glycosylase activity"/>
    <property type="evidence" value="ECO:0007669"/>
    <property type="project" value="UniProtKB-UniRule"/>
</dbReference>
<dbReference type="GO" id="GO:0097510">
    <property type="term" value="P:base-excision repair, AP site formation via deaminated base removal"/>
    <property type="evidence" value="ECO:0007669"/>
    <property type="project" value="TreeGrafter"/>
</dbReference>
<dbReference type="CDD" id="cd10027">
    <property type="entry name" value="UDG-F1-like"/>
    <property type="match status" value="1"/>
</dbReference>
<dbReference type="FunFam" id="3.40.470.10:FF:000008">
    <property type="entry name" value="Uracil-DNA glycosylase"/>
    <property type="match status" value="1"/>
</dbReference>
<dbReference type="Gene3D" id="3.40.470.10">
    <property type="entry name" value="Uracil-DNA glycosylase-like domain"/>
    <property type="match status" value="1"/>
</dbReference>
<dbReference type="HAMAP" id="MF_00148">
    <property type="entry name" value="UDG"/>
    <property type="match status" value="1"/>
</dbReference>
<dbReference type="InterPro" id="IPR002043">
    <property type="entry name" value="UDG_fam1"/>
</dbReference>
<dbReference type="InterPro" id="IPR018085">
    <property type="entry name" value="Ura-DNA_Glyclase_AS"/>
</dbReference>
<dbReference type="InterPro" id="IPR005122">
    <property type="entry name" value="Uracil-DNA_glycosylase-like"/>
</dbReference>
<dbReference type="InterPro" id="IPR036895">
    <property type="entry name" value="Uracil-DNA_glycosylase-like_sf"/>
</dbReference>
<dbReference type="NCBIfam" id="NF003588">
    <property type="entry name" value="PRK05254.1-1"/>
    <property type="match status" value="1"/>
</dbReference>
<dbReference type="NCBIfam" id="NF003589">
    <property type="entry name" value="PRK05254.1-2"/>
    <property type="match status" value="1"/>
</dbReference>
<dbReference type="NCBIfam" id="NF003591">
    <property type="entry name" value="PRK05254.1-4"/>
    <property type="match status" value="1"/>
</dbReference>
<dbReference type="NCBIfam" id="NF003592">
    <property type="entry name" value="PRK05254.1-5"/>
    <property type="match status" value="1"/>
</dbReference>
<dbReference type="NCBIfam" id="TIGR00628">
    <property type="entry name" value="ung"/>
    <property type="match status" value="1"/>
</dbReference>
<dbReference type="PANTHER" id="PTHR11264">
    <property type="entry name" value="URACIL-DNA GLYCOSYLASE"/>
    <property type="match status" value="1"/>
</dbReference>
<dbReference type="PANTHER" id="PTHR11264:SF0">
    <property type="entry name" value="URACIL-DNA GLYCOSYLASE"/>
    <property type="match status" value="1"/>
</dbReference>
<dbReference type="Pfam" id="PF03167">
    <property type="entry name" value="UDG"/>
    <property type="match status" value="1"/>
</dbReference>
<dbReference type="SMART" id="SM00986">
    <property type="entry name" value="UDG"/>
    <property type="match status" value="1"/>
</dbReference>
<dbReference type="SMART" id="SM00987">
    <property type="entry name" value="UreE_C"/>
    <property type="match status" value="1"/>
</dbReference>
<dbReference type="SUPFAM" id="SSF52141">
    <property type="entry name" value="Uracil-DNA glycosylase-like"/>
    <property type="match status" value="1"/>
</dbReference>
<dbReference type="PROSITE" id="PS00130">
    <property type="entry name" value="U_DNA_GLYCOSYLASE"/>
    <property type="match status" value="1"/>
</dbReference>
<protein>
    <recommendedName>
        <fullName evidence="1">Uracil-DNA glycosylase</fullName>
        <shortName evidence="1">UDG</shortName>
        <ecNumber evidence="1">3.2.2.27</ecNumber>
    </recommendedName>
</protein>
<reference key="1">
    <citation type="journal article" date="2009" name="PLoS Pathog.">
        <title>Genomic evidence for the evolution of Streptococcus equi: host restriction, increased virulence, and genetic exchange with human pathogens.</title>
        <authorList>
            <person name="Holden M.T.G."/>
            <person name="Heather Z."/>
            <person name="Paillot R."/>
            <person name="Steward K.F."/>
            <person name="Webb K."/>
            <person name="Ainslie F."/>
            <person name="Jourdan T."/>
            <person name="Bason N.C."/>
            <person name="Holroyd N.E."/>
            <person name="Mungall K."/>
            <person name="Quail M.A."/>
            <person name="Sanders M."/>
            <person name="Simmonds M."/>
            <person name="Willey D."/>
            <person name="Brooks K."/>
            <person name="Aanensen D.M."/>
            <person name="Spratt B.G."/>
            <person name="Jolley K.A."/>
            <person name="Maiden M.C.J."/>
            <person name="Kehoe M."/>
            <person name="Chanter N."/>
            <person name="Bentley S.D."/>
            <person name="Robinson C."/>
            <person name="Maskell D.J."/>
            <person name="Parkhill J."/>
            <person name="Waller A.S."/>
        </authorList>
    </citation>
    <scope>NUCLEOTIDE SEQUENCE [LARGE SCALE GENOMIC DNA]</scope>
    <source>
        <strain>4047</strain>
    </source>
</reference>
<organism>
    <name type="scientific">Streptococcus equi subsp. equi (strain 4047)</name>
    <dbReference type="NCBI Taxonomy" id="553482"/>
    <lineage>
        <taxon>Bacteria</taxon>
        <taxon>Bacillati</taxon>
        <taxon>Bacillota</taxon>
        <taxon>Bacilli</taxon>
        <taxon>Lactobacillales</taxon>
        <taxon>Streptococcaceae</taxon>
        <taxon>Streptococcus</taxon>
    </lineage>
</organism>
<evidence type="ECO:0000255" key="1">
    <source>
        <dbReference type="HAMAP-Rule" id="MF_00148"/>
    </source>
</evidence>
<proteinExistence type="inferred from homology"/>
<name>UNG_STRE4</name>
<feature type="chain" id="PRO_1000199796" description="Uracil-DNA glycosylase">
    <location>
        <begin position="1"/>
        <end position="217"/>
    </location>
</feature>
<feature type="active site" description="Proton acceptor" evidence="1">
    <location>
        <position position="62"/>
    </location>
</feature>
<keyword id="KW-0963">Cytoplasm</keyword>
<keyword id="KW-0227">DNA damage</keyword>
<keyword id="KW-0234">DNA repair</keyword>
<keyword id="KW-0378">Hydrolase</keyword>
<gene>
    <name evidence="1" type="primary">ung</name>
    <name type="ordered locus">SEQ_1343</name>
</gene>
<sequence>MTHSAWHDEIKQVLPKDYYRRINRFLDEVYATGVVYPPRDNVFKALQVTPLEETRVLILGQDPYHGPLQAQGLSFSVPDSIPAPPSLQNILEELAADIGVRNHHDLSSWAEQGVLLLNACLTVPEGRANGHAGLIWEPFTDAVIKVLNAKDRPVVFILWGAYARRKKALITNPIHHVIESPHPSPLSAYRGFFGSKPFSRANAILEKEGLGQIDWLR</sequence>
<accession>C0M7J9</accession>